<comment type="function">
    <text evidence="2">Catalyzes hydrolytic cleavage of carbon-halogen bonds in halogenated aliphatic compounds, leading to the formation of the corresponding primary alcohols, halide ions and protons.</text>
</comment>
<comment type="catalytic activity">
    <reaction evidence="2">
        <text>1-haloalkane + H2O = a halide anion + a primary alcohol + H(+)</text>
        <dbReference type="Rhea" id="RHEA:19081"/>
        <dbReference type="ChEBI" id="CHEBI:15377"/>
        <dbReference type="ChEBI" id="CHEBI:15378"/>
        <dbReference type="ChEBI" id="CHEBI:15734"/>
        <dbReference type="ChEBI" id="CHEBI:16042"/>
        <dbReference type="ChEBI" id="CHEBI:18060"/>
        <dbReference type="EC" id="3.8.1.5"/>
    </reaction>
</comment>
<comment type="subunit">
    <text evidence="2">Monomer.</text>
</comment>
<comment type="similarity">
    <text evidence="2">Belongs to the haloalkane dehalogenase family. Type 1 subfamily.</text>
</comment>
<sequence>MQVLRTPESRFAGLADWPFAPHYAEITDAGGARLRLHYVDEGPRDGAPVLLMHGEPSWAYLYRKIIPALAARGHRVIAPDLIGFGRSDKPAARGDYTYERHVAWMSAWLEGLDLRGLTLFCQDWGGLIGLRLVAAFPERFAGLVIANTGLPTGAGMTDGFKAWLDFSQNVPEMPIGLIVNMGTGRDLTPAEIAAYDAPFPDETYKEGARQFPMLVPVTPEHASVAENLAAWKVLEHFPGPVVTAFSDGDPVTRGGEAIFQSRMPGALGQPHRTLRGGHFLQEDCPDDIVDIVDAVARPESQS</sequence>
<proteinExistence type="inferred from homology"/>
<accession>B0SY51</accession>
<keyword id="KW-0378">Hydrolase</keyword>
<name>DHMA_CAUSK</name>
<evidence type="ECO:0000255" key="1"/>
<evidence type="ECO:0000255" key="2">
    <source>
        <dbReference type="HAMAP-Rule" id="MF_01230"/>
    </source>
</evidence>
<dbReference type="EC" id="3.8.1.5" evidence="2"/>
<dbReference type="EMBL" id="CP000927">
    <property type="protein sequence ID" value="ABZ71798.1"/>
    <property type="molecule type" value="Genomic_DNA"/>
</dbReference>
<dbReference type="SMR" id="B0SY51"/>
<dbReference type="STRING" id="366602.Caul_2671"/>
<dbReference type="ESTHER" id="causk-dhma">
    <property type="family name" value="Haloalkane_dehalogenase-HLD1"/>
</dbReference>
<dbReference type="KEGG" id="cak:Caul_2671"/>
<dbReference type="eggNOG" id="COG0596">
    <property type="taxonomic scope" value="Bacteria"/>
</dbReference>
<dbReference type="HOGENOM" id="CLU_020336_13_3_5"/>
<dbReference type="OrthoDB" id="9804723at2"/>
<dbReference type="GO" id="GO:0004301">
    <property type="term" value="F:epoxide hydrolase activity"/>
    <property type="evidence" value="ECO:0007669"/>
    <property type="project" value="TreeGrafter"/>
</dbReference>
<dbReference type="GO" id="GO:0018786">
    <property type="term" value="F:haloalkane dehalogenase activity"/>
    <property type="evidence" value="ECO:0007669"/>
    <property type="project" value="UniProtKB-UniRule"/>
</dbReference>
<dbReference type="Gene3D" id="3.40.50.1820">
    <property type="entry name" value="alpha/beta hydrolase"/>
    <property type="match status" value="1"/>
</dbReference>
<dbReference type="HAMAP" id="MF_01230">
    <property type="entry name" value="Haloalk_dehal_type1"/>
    <property type="match status" value="1"/>
</dbReference>
<dbReference type="InterPro" id="IPR000073">
    <property type="entry name" value="AB_hydrolase_1"/>
</dbReference>
<dbReference type="InterPro" id="IPR029058">
    <property type="entry name" value="AB_hydrolase_fold"/>
</dbReference>
<dbReference type="InterPro" id="IPR000639">
    <property type="entry name" value="Epox_hydrolase-like"/>
</dbReference>
<dbReference type="InterPro" id="IPR051340">
    <property type="entry name" value="Haloalkane_dehalogenase"/>
</dbReference>
<dbReference type="InterPro" id="IPR023489">
    <property type="entry name" value="Haloalkane_dehalogenase_1"/>
</dbReference>
<dbReference type="NCBIfam" id="NF002043">
    <property type="entry name" value="PRK00870.1"/>
    <property type="match status" value="1"/>
</dbReference>
<dbReference type="PANTHER" id="PTHR42977:SF3">
    <property type="entry name" value="AB HYDROLASE-1 DOMAIN-CONTAINING PROTEIN"/>
    <property type="match status" value="1"/>
</dbReference>
<dbReference type="PANTHER" id="PTHR42977">
    <property type="entry name" value="HYDROLASE-RELATED"/>
    <property type="match status" value="1"/>
</dbReference>
<dbReference type="Pfam" id="PF00561">
    <property type="entry name" value="Abhydrolase_1"/>
    <property type="match status" value="1"/>
</dbReference>
<dbReference type="PRINTS" id="PR00111">
    <property type="entry name" value="ABHYDROLASE"/>
</dbReference>
<dbReference type="PRINTS" id="PR00412">
    <property type="entry name" value="EPOXHYDRLASE"/>
</dbReference>
<dbReference type="SUPFAM" id="SSF53474">
    <property type="entry name" value="alpha/beta-Hydrolases"/>
    <property type="match status" value="1"/>
</dbReference>
<organism>
    <name type="scientific">Caulobacter sp. (strain K31)</name>
    <dbReference type="NCBI Taxonomy" id="366602"/>
    <lineage>
        <taxon>Bacteria</taxon>
        <taxon>Pseudomonadati</taxon>
        <taxon>Pseudomonadota</taxon>
        <taxon>Alphaproteobacteria</taxon>
        <taxon>Caulobacterales</taxon>
        <taxon>Caulobacteraceae</taxon>
        <taxon>Caulobacter</taxon>
    </lineage>
</organism>
<reference key="1">
    <citation type="submission" date="2008-01" db="EMBL/GenBank/DDBJ databases">
        <title>Complete sequence of chromosome of Caulobacter sp. K31.</title>
        <authorList>
            <consortium name="US DOE Joint Genome Institute"/>
            <person name="Copeland A."/>
            <person name="Lucas S."/>
            <person name="Lapidus A."/>
            <person name="Barry K."/>
            <person name="Glavina del Rio T."/>
            <person name="Dalin E."/>
            <person name="Tice H."/>
            <person name="Pitluck S."/>
            <person name="Bruce D."/>
            <person name="Goodwin L."/>
            <person name="Thompson L.S."/>
            <person name="Brettin T."/>
            <person name="Detter J.C."/>
            <person name="Han C."/>
            <person name="Schmutz J."/>
            <person name="Larimer F."/>
            <person name="Land M."/>
            <person name="Hauser L."/>
            <person name="Kyrpides N."/>
            <person name="Kim E."/>
            <person name="Stephens C."/>
            <person name="Richardson P."/>
        </authorList>
    </citation>
    <scope>NUCLEOTIDE SEQUENCE [LARGE SCALE GENOMIC DNA]</scope>
    <source>
        <strain>K31</strain>
    </source>
</reference>
<gene>
    <name evidence="2" type="primary">dhmA</name>
    <name type="ordered locus">Caul_2671</name>
</gene>
<protein>
    <recommendedName>
        <fullName evidence="2">Haloalkane dehalogenase</fullName>
        <ecNumber evidence="2">3.8.1.5</ecNumber>
    </recommendedName>
</protein>
<feature type="chain" id="PRO_1000085715" description="Haloalkane dehalogenase">
    <location>
        <begin position="1"/>
        <end position="302"/>
    </location>
</feature>
<feature type="domain" description="AB hydrolase-1" evidence="1">
    <location>
        <begin position="48"/>
        <end position="150"/>
    </location>
</feature>
<feature type="active site" description="Nucleophile" evidence="2">
    <location>
        <position position="123"/>
    </location>
</feature>
<feature type="active site" description="Proton donor" evidence="2">
    <location>
        <position position="249"/>
    </location>
</feature>
<feature type="active site" description="Proton acceptor" evidence="2">
    <location>
        <position position="278"/>
    </location>
</feature>